<protein>
    <recommendedName>
        <fullName>Uncharacterized HNH endonuclease L247</fullName>
        <ecNumber>3.1.-.-</ecNumber>
    </recommendedName>
</protein>
<reference key="1">
    <citation type="journal article" date="2004" name="Science">
        <title>The 1.2-megabase genome sequence of Mimivirus.</title>
        <authorList>
            <person name="Raoult D."/>
            <person name="Audic S."/>
            <person name="Robert C."/>
            <person name="Abergel C."/>
            <person name="Renesto P."/>
            <person name="Ogata H."/>
            <person name="La Scola B."/>
            <person name="Susan M."/>
            <person name="Claverie J.-M."/>
        </authorList>
    </citation>
    <scope>NUCLEOTIDE SEQUENCE [LARGE SCALE GENOMIC DNA]</scope>
    <source>
        <strain>Rowbotham-Bradford</strain>
    </source>
</reference>
<organism>
    <name type="scientific">Acanthamoeba polyphaga mimivirus</name>
    <name type="common">APMV</name>
    <dbReference type="NCBI Taxonomy" id="212035"/>
    <lineage>
        <taxon>Viruses</taxon>
        <taxon>Varidnaviria</taxon>
        <taxon>Bamfordvirae</taxon>
        <taxon>Nucleocytoviricota</taxon>
        <taxon>Megaviricetes</taxon>
        <taxon>Imitervirales</taxon>
        <taxon>Mimiviridae</taxon>
        <taxon>Megamimivirinae</taxon>
        <taxon>Mimivirus</taxon>
        <taxon>Mimivirus bradfordmassiliense</taxon>
    </lineage>
</organism>
<keyword id="KW-0255">Endonuclease</keyword>
<keyword id="KW-0378">Hydrolase</keyword>
<keyword id="KW-0540">Nuclease</keyword>
<keyword id="KW-1185">Reference proteome</keyword>
<feature type="chain" id="PRO_0000309578" description="Uncharacterized HNH endonuclease L247">
    <location>
        <begin position="1"/>
        <end position="398"/>
    </location>
</feature>
<feature type="region of interest" description="Disordered" evidence="1">
    <location>
        <begin position="313"/>
        <end position="398"/>
    </location>
</feature>
<feature type="compositionally biased region" description="Low complexity" evidence="1">
    <location>
        <begin position="314"/>
        <end position="333"/>
    </location>
</feature>
<feature type="compositionally biased region" description="Low complexity" evidence="1">
    <location>
        <begin position="343"/>
        <end position="398"/>
    </location>
</feature>
<gene>
    <name type="ordered locus">MIMI_L247</name>
</gene>
<accession>Q5UPT4</accession>
<dbReference type="EC" id="3.1.-.-"/>
<dbReference type="EMBL" id="AY653733">
    <property type="protein sequence ID" value="AAV50519.1"/>
    <property type="molecule type" value="Genomic_DNA"/>
</dbReference>
<dbReference type="SMR" id="Q5UPT4"/>
<dbReference type="Proteomes" id="UP000001134">
    <property type="component" value="Genome"/>
</dbReference>
<dbReference type="GO" id="GO:0004519">
    <property type="term" value="F:endonuclease activity"/>
    <property type="evidence" value="ECO:0007669"/>
    <property type="project" value="UniProtKB-KW"/>
</dbReference>
<dbReference type="Gene3D" id="3.90.75.20">
    <property type="match status" value="2"/>
</dbReference>
<dbReference type="Gene3D" id="1.10.10.10">
    <property type="entry name" value="Winged helix-like DNA-binding domain superfamily/Winged helix DNA-binding domain"/>
    <property type="match status" value="1"/>
</dbReference>
<dbReference type="InterPro" id="IPR044925">
    <property type="entry name" value="His-Me_finger_sf"/>
</dbReference>
<dbReference type="InterPro" id="IPR003615">
    <property type="entry name" value="HNH_nuc"/>
</dbReference>
<dbReference type="InterPro" id="IPR003647">
    <property type="entry name" value="Intron_nuc_1_rpt"/>
</dbReference>
<dbReference type="InterPro" id="IPR010902">
    <property type="entry name" value="NUMOD4"/>
</dbReference>
<dbReference type="InterPro" id="IPR036388">
    <property type="entry name" value="WH-like_DNA-bd_sf"/>
</dbReference>
<dbReference type="Pfam" id="PF13392">
    <property type="entry name" value="HNH_3"/>
    <property type="match status" value="1"/>
</dbReference>
<dbReference type="Pfam" id="PF07463">
    <property type="entry name" value="NUMOD4"/>
    <property type="match status" value="1"/>
</dbReference>
<dbReference type="SMART" id="SM00497">
    <property type="entry name" value="IENR1"/>
    <property type="match status" value="1"/>
</dbReference>
<dbReference type="SUPFAM" id="SSF64496">
    <property type="entry name" value="DNA-binding domain of intron-encoded endonucleases"/>
    <property type="match status" value="1"/>
</dbReference>
<dbReference type="SUPFAM" id="SSF54060">
    <property type="entry name" value="His-Me finger endonucleases"/>
    <property type="match status" value="2"/>
</dbReference>
<sequence length="398" mass="44486">MTTYNLSKKSEIWKEIPIEGFEKYMVSNFGNVKNINTDKILSQSNRGGYFSVYLKPKDIDAQQKKIHRLVALTFVKNKDPENKKVVNHINGDKLDNRAENLEWVTASENVQHAVDNNLITMTKRAVIQCNLKTGKKIKEFESVTDASNETGISTGHICDAANGKWKQAGGYAWKYSKKDSAKIDIDMSKFKQLVDFPNYLINNEGQVYSLARKRFMKPIHRGDSGMNISLSEGDKQKTMLVHKLVASYFLKKNNDDHNHVRHKDGNRQNNNVSNLEWCYLGGMDKHKPESHFSHDYYDEKTAIPLTERKKAVKTIKSSGSKTSKSIGSKTNKSAGSKTASKLGSKTAIKSGSKTTSKISTKSGSKTAIKSGSKTASKISTKSGSKTSKTSKSIKYYEV</sequence>
<proteinExistence type="predicted"/>
<name>YL247_MIMIV</name>
<evidence type="ECO:0000256" key="1">
    <source>
        <dbReference type="SAM" id="MobiDB-lite"/>
    </source>
</evidence>
<organismHost>
    <name type="scientific">Acanthamoeba polyphaga</name>
    <name type="common">Amoeba</name>
    <dbReference type="NCBI Taxonomy" id="5757"/>
</organismHost>